<keyword id="KW-0007">Acetylation</keyword>
<keyword id="KW-0010">Activator</keyword>
<keyword id="KW-0090">Biological rhythms</keyword>
<keyword id="KW-0539">Nucleus</keyword>
<keyword id="KW-0597">Phosphoprotein</keyword>
<keyword id="KW-1185">Reference proteome</keyword>
<keyword id="KW-0694">RNA-binding</keyword>
<keyword id="KW-0804">Transcription</keyword>
<keyword id="KW-0805">Transcription regulation</keyword>
<keyword id="KW-0832">Ubl conjugation</keyword>
<dbReference type="EMBL" id="AB106108">
    <property type="protein sequence ID" value="BAC66019.1"/>
    <property type="molecule type" value="mRNA"/>
</dbReference>
<dbReference type="EMBL" id="AY346131">
    <property type="protein sequence ID" value="AAQ54575.1"/>
    <property type="molecule type" value="mRNA"/>
</dbReference>
<dbReference type="RefSeq" id="NP_999128.2">
    <property type="nucleotide sequence ID" value="NM_213963.2"/>
</dbReference>
<dbReference type="SMR" id="Q865B6"/>
<dbReference type="FunCoup" id="Q865B6">
    <property type="interactions" value="220"/>
</dbReference>
<dbReference type="STRING" id="9823.ENSSSCP00000032437"/>
<dbReference type="PaxDb" id="9823-ENSSSCP00000026890"/>
<dbReference type="Ensembl" id="ENSSSCT00000045482.2">
    <property type="protein sequence ID" value="ENSSSCP00000032437.1"/>
    <property type="gene ID" value="ENSSSCG00000029275.4"/>
</dbReference>
<dbReference type="Ensembl" id="ENSSSCT00030063112.1">
    <property type="protein sequence ID" value="ENSSSCP00030028869.1"/>
    <property type="gene ID" value="ENSSSCG00030045092.1"/>
</dbReference>
<dbReference type="Ensembl" id="ENSSSCT00040037153.1">
    <property type="protein sequence ID" value="ENSSSCP00040015451.1"/>
    <property type="gene ID" value="ENSSSCG00040027395.1"/>
</dbReference>
<dbReference type="Ensembl" id="ENSSSCT00055035477.1">
    <property type="protein sequence ID" value="ENSSSCP00055028183.1"/>
    <property type="gene ID" value="ENSSSCG00055018093.1"/>
</dbReference>
<dbReference type="Ensembl" id="ENSSSCT00060098488.1">
    <property type="protein sequence ID" value="ENSSSCP00060042713.1"/>
    <property type="gene ID" value="ENSSSCG00060071790.1"/>
</dbReference>
<dbReference type="Ensembl" id="ENSSSCT00065057615.1">
    <property type="protein sequence ID" value="ENSSSCP00065025022.1"/>
    <property type="gene ID" value="ENSSSCG00065042112.1"/>
</dbReference>
<dbReference type="Ensembl" id="ENSSSCT00070045683.1">
    <property type="protein sequence ID" value="ENSSSCP00070038505.1"/>
    <property type="gene ID" value="ENSSSCG00070022943.1"/>
</dbReference>
<dbReference type="Ensembl" id="ENSSSCT00090015063">
    <property type="protein sequence ID" value="ENSSSCP00090009705"/>
    <property type="gene ID" value="ENSSSCG00090008322"/>
</dbReference>
<dbReference type="Ensembl" id="ENSSSCT00110010107">
    <property type="protein sequence ID" value="ENSSSCP00110007097"/>
    <property type="gene ID" value="ENSSSCG00110005108"/>
</dbReference>
<dbReference type="Ensembl" id="ENSSSCT00115003945">
    <property type="protein sequence ID" value="ENSSSCP00115003632"/>
    <property type="gene ID" value="ENSSSCG00115002366"/>
</dbReference>
<dbReference type="Ensembl" id="ENSSSCT00130012967">
    <property type="protein sequence ID" value="ENSSSCP00130008617"/>
    <property type="gene ID" value="ENSSSCG00130007111"/>
</dbReference>
<dbReference type="GeneID" id="397013"/>
<dbReference type="KEGG" id="ssc:397013"/>
<dbReference type="CTD" id="10891"/>
<dbReference type="VGNC" id="VGNC:91685">
    <property type="gene designation" value="PPARGC1A"/>
</dbReference>
<dbReference type="eggNOG" id="ENOG502QSXU">
    <property type="taxonomic scope" value="Eukaryota"/>
</dbReference>
<dbReference type="GeneTree" id="ENSGT00950000183137"/>
<dbReference type="InParanoid" id="Q865B6"/>
<dbReference type="OMA" id="DLPCNNR"/>
<dbReference type="OrthoDB" id="10047851at2759"/>
<dbReference type="Reactome" id="R-SSC-9841922">
    <property type="pathway name" value="MLL4 and MLL3 complexes regulate expression of PPARG target genes in adipogenesis and hepatic steatosis"/>
</dbReference>
<dbReference type="Proteomes" id="UP000008227">
    <property type="component" value="Chromosome 8"/>
</dbReference>
<dbReference type="Proteomes" id="UP000314985">
    <property type="component" value="Chromosome 8"/>
</dbReference>
<dbReference type="Proteomes" id="UP000694570">
    <property type="component" value="Unplaced"/>
</dbReference>
<dbReference type="Proteomes" id="UP000694571">
    <property type="component" value="Unplaced"/>
</dbReference>
<dbReference type="Proteomes" id="UP000694720">
    <property type="component" value="Unplaced"/>
</dbReference>
<dbReference type="Proteomes" id="UP000694722">
    <property type="component" value="Unplaced"/>
</dbReference>
<dbReference type="Proteomes" id="UP000694723">
    <property type="component" value="Unplaced"/>
</dbReference>
<dbReference type="Proteomes" id="UP000694724">
    <property type="component" value="Unplaced"/>
</dbReference>
<dbReference type="Proteomes" id="UP000694725">
    <property type="component" value="Unplaced"/>
</dbReference>
<dbReference type="Proteomes" id="UP000694726">
    <property type="component" value="Unplaced"/>
</dbReference>
<dbReference type="Proteomes" id="UP000694727">
    <property type="component" value="Unplaced"/>
</dbReference>
<dbReference type="Proteomes" id="UP000694728">
    <property type="component" value="Unplaced"/>
</dbReference>
<dbReference type="Bgee" id="ENSSSCG00000029275">
    <property type="expression patterns" value="Expressed in heart left ventricle and 38 other cell types or tissues"/>
</dbReference>
<dbReference type="ExpressionAtlas" id="Q865B6">
    <property type="expression patterns" value="baseline and differential"/>
</dbReference>
<dbReference type="GO" id="GO:0005829">
    <property type="term" value="C:cytosol"/>
    <property type="evidence" value="ECO:0007669"/>
    <property type="project" value="Ensembl"/>
</dbReference>
<dbReference type="GO" id="GO:0005634">
    <property type="term" value="C:nucleus"/>
    <property type="evidence" value="ECO:0000250"/>
    <property type="project" value="UniProtKB"/>
</dbReference>
<dbReference type="GO" id="GO:0016605">
    <property type="term" value="C:PML body"/>
    <property type="evidence" value="ECO:0007669"/>
    <property type="project" value="UniProtKB-SubCell"/>
</dbReference>
<dbReference type="GO" id="GO:0031490">
    <property type="term" value="F:chromatin DNA binding"/>
    <property type="evidence" value="ECO:0000250"/>
    <property type="project" value="UniProtKB"/>
</dbReference>
<dbReference type="GO" id="GO:0003677">
    <property type="term" value="F:DNA binding"/>
    <property type="evidence" value="ECO:0000250"/>
    <property type="project" value="AgBase"/>
</dbReference>
<dbReference type="GO" id="GO:0106222">
    <property type="term" value="F:lncRNA binding"/>
    <property type="evidence" value="ECO:0007669"/>
    <property type="project" value="Ensembl"/>
</dbReference>
<dbReference type="GO" id="GO:0016922">
    <property type="term" value="F:nuclear receptor binding"/>
    <property type="evidence" value="ECO:0007669"/>
    <property type="project" value="Ensembl"/>
</dbReference>
<dbReference type="GO" id="GO:0043565">
    <property type="term" value="F:sequence-specific DNA binding"/>
    <property type="evidence" value="ECO:0000250"/>
    <property type="project" value="UniProtKB"/>
</dbReference>
<dbReference type="GO" id="GO:0003713">
    <property type="term" value="F:transcription coactivator activity"/>
    <property type="evidence" value="ECO:0000250"/>
    <property type="project" value="UniProtKB"/>
</dbReference>
<dbReference type="GO" id="GO:0031625">
    <property type="term" value="F:ubiquitin protein ligase binding"/>
    <property type="evidence" value="ECO:0007669"/>
    <property type="project" value="Ensembl"/>
</dbReference>
<dbReference type="GO" id="GO:0060612">
    <property type="term" value="P:adipose tissue development"/>
    <property type="evidence" value="ECO:0007669"/>
    <property type="project" value="Ensembl"/>
</dbReference>
<dbReference type="GO" id="GO:0034599">
    <property type="term" value="P:cellular response to oxidative stress"/>
    <property type="evidence" value="ECO:0000250"/>
    <property type="project" value="UniProtKB"/>
</dbReference>
<dbReference type="GO" id="GO:0032922">
    <property type="term" value="P:circadian regulation of gene expression"/>
    <property type="evidence" value="ECO:0000250"/>
    <property type="project" value="UniProtKB"/>
</dbReference>
<dbReference type="GO" id="GO:0097009">
    <property type="term" value="P:energy homeostasis"/>
    <property type="evidence" value="ECO:0000250"/>
    <property type="project" value="UniProtKB"/>
</dbReference>
<dbReference type="GO" id="GO:0006094">
    <property type="term" value="P:gluconeogenesis"/>
    <property type="evidence" value="ECO:0000250"/>
    <property type="project" value="UniProtKB"/>
</dbReference>
<dbReference type="GO" id="GO:0007005">
    <property type="term" value="P:mitochondrion organization"/>
    <property type="evidence" value="ECO:0007669"/>
    <property type="project" value="Ensembl"/>
</dbReference>
<dbReference type="GO" id="GO:0043524">
    <property type="term" value="P:negative regulation of neuron apoptotic process"/>
    <property type="evidence" value="ECO:0000250"/>
    <property type="project" value="UniProtKB"/>
</dbReference>
<dbReference type="GO" id="GO:0048662">
    <property type="term" value="P:negative regulation of smooth muscle cell proliferation"/>
    <property type="evidence" value="ECO:0007669"/>
    <property type="project" value="Ensembl"/>
</dbReference>
<dbReference type="GO" id="GO:0051402">
    <property type="term" value="P:neuron apoptotic process"/>
    <property type="evidence" value="ECO:0007669"/>
    <property type="project" value="Ensembl"/>
</dbReference>
<dbReference type="GO" id="GO:0120162">
    <property type="term" value="P:positive regulation of cold-induced thermogenesis"/>
    <property type="evidence" value="ECO:0007669"/>
    <property type="project" value="Ensembl"/>
</dbReference>
<dbReference type="GO" id="GO:0045893">
    <property type="term" value="P:positive regulation of DNA-templated transcription"/>
    <property type="evidence" value="ECO:0000250"/>
    <property type="project" value="AgBase"/>
</dbReference>
<dbReference type="GO" id="GO:0010628">
    <property type="term" value="P:positive regulation of gene expression"/>
    <property type="evidence" value="ECO:0007669"/>
    <property type="project" value="Ensembl"/>
</dbReference>
<dbReference type="GO" id="GO:0045944">
    <property type="term" value="P:positive regulation of transcription by RNA polymerase II"/>
    <property type="evidence" value="ECO:0000250"/>
    <property type="project" value="AgBase"/>
</dbReference>
<dbReference type="GO" id="GO:0042752">
    <property type="term" value="P:regulation of circadian rhythm"/>
    <property type="evidence" value="ECO:0000250"/>
    <property type="project" value="UniProtKB"/>
</dbReference>
<dbReference type="GO" id="GO:0006355">
    <property type="term" value="P:regulation of DNA-templated transcription"/>
    <property type="evidence" value="ECO:0000250"/>
    <property type="project" value="UniProtKB"/>
</dbReference>
<dbReference type="GO" id="GO:0022904">
    <property type="term" value="P:respiratory electron transport chain"/>
    <property type="evidence" value="ECO:0000250"/>
    <property type="project" value="UniProtKB"/>
</dbReference>
<dbReference type="GO" id="GO:0002021">
    <property type="term" value="P:response to dietary excess"/>
    <property type="evidence" value="ECO:0007669"/>
    <property type="project" value="Ensembl"/>
</dbReference>
<dbReference type="GO" id="GO:0014850">
    <property type="term" value="P:response to muscle activity"/>
    <property type="evidence" value="ECO:0000250"/>
    <property type="project" value="UniProtKB"/>
</dbReference>
<dbReference type="CDD" id="cd12623">
    <property type="entry name" value="RRM_PPARGC1A"/>
    <property type="match status" value="1"/>
</dbReference>
<dbReference type="FunFam" id="3.30.70.330:FF:000184">
    <property type="entry name" value="Peroxisome proliferator-activated receptor gamma coactivator 1-alpha"/>
    <property type="match status" value="1"/>
</dbReference>
<dbReference type="Gene3D" id="3.30.70.330">
    <property type="match status" value="1"/>
</dbReference>
<dbReference type="InterPro" id="IPR012677">
    <property type="entry name" value="Nucleotide-bd_a/b_plait_sf"/>
</dbReference>
<dbReference type="InterPro" id="IPR034605">
    <property type="entry name" value="PGC-1"/>
</dbReference>
<dbReference type="InterPro" id="IPR034833">
    <property type="entry name" value="PPARGC1A_RRM"/>
</dbReference>
<dbReference type="InterPro" id="IPR035979">
    <property type="entry name" value="RBD_domain_sf"/>
</dbReference>
<dbReference type="InterPro" id="IPR000504">
    <property type="entry name" value="RRM_dom"/>
</dbReference>
<dbReference type="PANTHER" id="PTHR15528">
    <property type="entry name" value="PEROXISOME PROLIFERATOR ACTIVATED RECEPTOR GAMMA COACTIVATOR 1 PGC-1 -RELATED"/>
    <property type="match status" value="1"/>
</dbReference>
<dbReference type="PANTHER" id="PTHR15528:SF10">
    <property type="entry name" value="PEROXISOME PROLIFERATOR-ACTIVATED RECEPTOR GAMMA COACTIVATOR 1-ALPHA"/>
    <property type="match status" value="1"/>
</dbReference>
<dbReference type="Pfam" id="PF00076">
    <property type="entry name" value="RRM_1"/>
    <property type="match status" value="1"/>
</dbReference>
<dbReference type="SMART" id="SM00360">
    <property type="entry name" value="RRM"/>
    <property type="match status" value="1"/>
</dbReference>
<dbReference type="SUPFAM" id="SSF54928">
    <property type="entry name" value="RNA-binding domain, RBD"/>
    <property type="match status" value="1"/>
</dbReference>
<dbReference type="PROSITE" id="PS50102">
    <property type="entry name" value="RRM"/>
    <property type="match status" value="1"/>
</dbReference>
<gene>
    <name type="primary">PPARGC1A</name>
    <name type="synonym">PGC1</name>
    <name type="synonym">PGC1A</name>
    <name type="synonym">PPARGC1</name>
</gene>
<feature type="chain" id="PRO_0000081734" description="Peroxisome proliferator-activated receptor gamma coactivator 1-alpha">
    <location>
        <begin position="1"/>
        <end position="796"/>
    </location>
</feature>
<feature type="domain" description="RRM" evidence="3">
    <location>
        <begin position="675"/>
        <end position="751"/>
    </location>
</feature>
<feature type="region of interest" description="Disordered" evidence="4">
    <location>
        <begin position="98"/>
        <end position="138"/>
    </location>
</feature>
<feature type="region of interest" description="Disordered" evidence="4">
    <location>
        <begin position="211"/>
        <end position="274"/>
    </location>
</feature>
<feature type="region of interest" description="Disordered" evidence="4">
    <location>
        <begin position="288"/>
        <end position="349"/>
    </location>
</feature>
<feature type="region of interest" description="Interaction with PPARG" evidence="2">
    <location>
        <begin position="291"/>
        <end position="337"/>
    </location>
</feature>
<feature type="region of interest" description="Mediates interaction with RNF34" evidence="2">
    <location>
        <begin position="348"/>
        <end position="796"/>
    </location>
</feature>
<feature type="region of interest" description="Disordered" evidence="4">
    <location>
        <begin position="463"/>
        <end position="487"/>
    </location>
</feature>
<feature type="region of interest" description="Disordered" evidence="4">
    <location>
        <begin position="541"/>
        <end position="637"/>
    </location>
</feature>
<feature type="region of interest" description="Disordered" evidence="4">
    <location>
        <begin position="648"/>
        <end position="667"/>
    </location>
</feature>
<feature type="short sequence motif" description="LXXLL motif">
    <location>
        <begin position="142"/>
        <end position="146"/>
    </location>
</feature>
<feature type="compositionally biased region" description="Polar residues" evidence="4">
    <location>
        <begin position="114"/>
        <end position="127"/>
    </location>
</feature>
<feature type="compositionally biased region" description="Basic and acidic residues" evidence="4">
    <location>
        <begin position="217"/>
        <end position="235"/>
    </location>
</feature>
<feature type="compositionally biased region" description="Polar residues" evidence="4">
    <location>
        <begin position="242"/>
        <end position="258"/>
    </location>
</feature>
<feature type="compositionally biased region" description="Polar residues" evidence="4">
    <location>
        <begin position="332"/>
        <end position="344"/>
    </location>
</feature>
<feature type="compositionally biased region" description="Basic and acidic residues" evidence="4">
    <location>
        <begin position="477"/>
        <end position="486"/>
    </location>
</feature>
<feature type="compositionally biased region" description="Low complexity" evidence="4">
    <location>
        <begin position="568"/>
        <end position="603"/>
    </location>
</feature>
<feature type="compositionally biased region" description="Basic residues" evidence="4">
    <location>
        <begin position="620"/>
        <end position="629"/>
    </location>
</feature>
<feature type="modified residue" description="N6-acetyllysine" evidence="1">
    <location>
        <position position="77"/>
    </location>
</feature>
<feature type="modified residue" description="N6-acetyllysine" evidence="1">
    <location>
        <position position="144"/>
    </location>
</feature>
<feature type="modified residue" description="Phosphothreonine; by AMPK" evidence="1">
    <location>
        <position position="176"/>
    </location>
</feature>
<feature type="modified residue" description="N6-acetyllysine" evidence="1">
    <location>
        <position position="182"/>
    </location>
</feature>
<feature type="modified residue" description="N6-acetyllysine" evidence="1">
    <location>
        <position position="252"/>
    </location>
</feature>
<feature type="modified residue" description="N6-acetyllysine" evidence="1">
    <location>
        <position position="269"/>
    </location>
</feature>
<feature type="modified residue" description="N6-acetyllysine" evidence="1">
    <location>
        <position position="276"/>
    </location>
</feature>
<feature type="modified residue" description="N6-acetyllysine" evidence="1">
    <location>
        <position position="319"/>
    </location>
</feature>
<feature type="modified residue" description="N6-acetyllysine" evidence="1">
    <location>
        <position position="345"/>
    </location>
</feature>
<feature type="modified residue" description="N6-acetyllysine" evidence="1">
    <location>
        <position position="411"/>
    </location>
</feature>
<feature type="modified residue" description="N6-acetyllysine" evidence="1">
    <location>
        <position position="449"/>
    </location>
</feature>
<feature type="modified residue" description="Phosphoserine; by AMPK" evidence="1">
    <location>
        <position position="537"/>
    </location>
</feature>
<feature type="modified residue" description="N6-acetyllysine" evidence="1">
    <location>
        <position position="756"/>
    </location>
</feature>
<feature type="modified residue" description="N6-acetyllysine" evidence="1">
    <location>
        <position position="777"/>
    </location>
</feature>
<feature type="sequence variant" evidence="5">
    <original>C</original>
    <variation>S</variation>
    <location>
        <position position="430"/>
    </location>
</feature>
<feature type="sequence variant" evidence="5">
    <original>A</original>
    <variation>V</variation>
    <location>
        <position position="790"/>
    </location>
</feature>
<evidence type="ECO:0000250" key="1">
    <source>
        <dbReference type="UniProtKB" id="O70343"/>
    </source>
</evidence>
<evidence type="ECO:0000250" key="2">
    <source>
        <dbReference type="UniProtKB" id="Q9UBK2"/>
    </source>
</evidence>
<evidence type="ECO:0000255" key="3">
    <source>
        <dbReference type="PROSITE-ProRule" id="PRU00176"/>
    </source>
</evidence>
<evidence type="ECO:0000256" key="4">
    <source>
        <dbReference type="SAM" id="MobiDB-lite"/>
    </source>
</evidence>
<evidence type="ECO:0000269" key="5">
    <source ref="2"/>
</evidence>
<proteinExistence type="evidence at transcript level"/>
<organism>
    <name type="scientific">Sus scrofa</name>
    <name type="common">Pig</name>
    <dbReference type="NCBI Taxonomy" id="9823"/>
    <lineage>
        <taxon>Eukaryota</taxon>
        <taxon>Metazoa</taxon>
        <taxon>Chordata</taxon>
        <taxon>Craniata</taxon>
        <taxon>Vertebrata</taxon>
        <taxon>Euteleostomi</taxon>
        <taxon>Mammalia</taxon>
        <taxon>Eutheria</taxon>
        <taxon>Laurasiatheria</taxon>
        <taxon>Artiodactyla</taxon>
        <taxon>Suina</taxon>
        <taxon>Suidae</taxon>
        <taxon>Sus</taxon>
    </lineage>
</organism>
<accession>Q865B6</accession>
<comment type="function">
    <text evidence="1 2">Transcriptional coactivator for steroid receptors and nuclear receptors. Greatly increases the transcriptional activity of PPARG and thyroid hormone receptor on the uncoupling protein promoter. Can regulate key mitochondrial genes that contribute to the program of adaptive thermogenesis. Plays an essential role in metabolic reprogramming in response to dietary availability through coordination of the expression of a wide array of genes involved in glucose and fatty acid metabolism. Acts as a key regulator of gluconeogenesis: stimulates hepatic gluconeogenesis by increasing the expression of gluconeogenic enzymes, and acting together with FOXO1 to promote the fasting gluconeogenic program (By similarity). Induces the expression of PERM1 in the skeletal muscle in an ESRRA-dependent manner. Also involved in the integration of the circadian rhythms and energy metabolism. Required for oscillatory expression of clock genes, such as BMAL1 and NR1D1, through the coactivation of RORA and RORC, and metabolic genes, such as PDK4 and PEPCK (By similarity).</text>
</comment>
<comment type="subunit">
    <text evidence="1 2">Homooligomer (By similarity). Interacts with MYBBP1A; inhibits MYBBP1A transcriptional activation. Interacts with PRDM16, LPIN1 and PML. Interacts (via LXXLL motif) with RORA and RORC (via AF-2 motif); activates RORA and RORC transcriptional activation (By similarity). Interacts with LRPPRC (By similarity). Interacts with FOXO1 (By similarity). Interacts with NR5A2 (By similarity).</text>
</comment>
<comment type="subcellular location">
    <subcellularLocation>
        <location evidence="1">Nucleus</location>
    </subcellularLocation>
    <subcellularLocation>
        <location evidence="1">Nucleus</location>
        <location evidence="1">PML body</location>
    </subcellularLocation>
</comment>
<comment type="PTM">
    <text evidence="1">Phosphorylation by AMPK in skeletal muscle increases activation of its own promoter. Phosphorylated by CLK2.</text>
</comment>
<comment type="PTM">
    <text evidence="2">Heavily acetylated by KAT2A/GCN5 under conditions of high nutrients, leading to inactivation of PPARGC1A. Deacetylated by SIRT1 in low nutrients/high NAD conditions, leading to its activation.</text>
</comment>
<comment type="PTM">
    <text evidence="2">Ubiquitinated. Ubiquitination by RNF34 induces proteasomal degradation.</text>
</comment>
<sequence>MAWDMCNQDSVWTDIECAALVGEDQPLCPDLPELDLSELDVNDLDTDSFLGGLKWCSDQSEIISNQYNNEPSNIFEKIDEENEANLLAVLTETLDSLPVDEDGLPSFDALTDGDVTTENEASPSSMPDGTPPPQEAEEPSLLKKLLLAPANTQLSYNECSGLSTQNHANHNHRIRTNPAVVKTENSWSNKAKSICQQQKPQRRPCSELLKYLTTNDDPPHTKPTETRNSSRDKCTSKKKAHTQSQSQHLQAKPTSLSLPLTPESPNDPKGSPFENKTIERTLSVELSGTAGLTPPTTPPHKANQDNPFRASPKLKPPCKTVVPPPSKKTRYSESSGTHGNNSTKKGPEQSELYAQLSKTSALGGGHEERKARRPSLRLFGDHDYCQSINSKAEILINISQELHDSRQLDSKDAASDWQRQMCSSTDSDQCYLTETSEASRQVSPGSARKQLQDQEIRAELNKHFGHPSQAVFDDEADKTSELRDSDFSNEQFSKLPMFINSGLAMDGLFDDSEDESDKLNSPWDGTQSYSLFDVSPSCSSFNSPCRDSVSPPKSLFSQRPQRMRSRSRSFSQHRSCSRSPYSRSRSRSPGSRSSSRSCYYSESGHCRHRTHRNSPLCARSRSRSPYSRRPRYDSYEEYQHERLKREEYRREYEKRESERAKQRERQRQKAIEERRVIYVGKIRPDTTRTELRDRFEVFGEIEECTVNLRDDGDSYGFITYRYTCDAFAALENGYTLRRSNETDFELYFCGRKQFFKSNYADLDSNSDDFDPASTKSKYDSLDFDSLLKEAQRSLRR</sequence>
<reference key="1">
    <citation type="submission" date="2003-03" db="EMBL/GenBank/DDBJ databases">
        <title>Sequences of bovine and swine PGC-1alpha.</title>
        <authorList>
            <person name="Chikuni K."/>
            <person name="Muroya S."/>
            <person name="Nakajima I."/>
        </authorList>
    </citation>
    <scope>NUCLEOTIDE SEQUENCE [MRNA]</scope>
</reference>
<reference key="2">
    <citation type="submission" date="2003-07" db="EMBL/GenBank/DDBJ databases">
        <title>Porcine peroxisome proliferative activated receptor gamma coactivator-1 (ppargc1) gene: cDNA sequence, chromosomal localization and polymorphisms.</title>
        <authorList>
            <person name="Milosevic Berlic T."/>
            <person name="Kokalj-Vokac N."/>
            <person name="Anderson S.I."/>
            <person name="Archibald A.L."/>
            <person name="Dovc P."/>
        </authorList>
    </citation>
    <scope>NUCLEOTIDE SEQUENCE [MRNA]</scope>
    <scope>VARIANTS SER-430 AND VAL-790</scope>
</reference>
<name>PRGC1_PIG</name>
<protein>
    <recommendedName>
        <fullName>Peroxisome proliferator-activated receptor gamma coactivator 1-alpha</fullName>
        <shortName>PGC-1-alpha</shortName>
        <shortName>PPAR-gamma coactivator 1-alpha</shortName>
        <shortName>PPARGC-1-alpha</shortName>
    </recommendedName>
</protein>